<proteinExistence type="inferred from homology"/>
<sequence>MSDFHHISVMAAEVIQYLAPRAGGIYVDGTLGGGGHARQILEASAPDGLLIGFDRDREAIAIAAERLAPYGERVRLVQRNFACLAETLDEMGIDAIDGFLLDVGVSSHQLDTAARGFSFQHDAPLDMRMDVSSGQSASDLVNTLSEADLARIIWDYGEERWAKRIAAFIVKRREESPIETTMQLVDVIKGAVPRGAWDVRLHPATRTFQALRIAVNDELASLEKALAAGVRFLKKGGRGVVISFHSLEDRIVKTSFRSFAQGCTCPKSIPRCVCGKLPLVKVITGKPVMANEAEVSMNPRSRSARLRAAEKI</sequence>
<accession>A5G8K8</accession>
<protein>
    <recommendedName>
        <fullName evidence="1">Ribosomal RNA small subunit methyltransferase H</fullName>
        <ecNumber evidence="1">2.1.1.199</ecNumber>
    </recommendedName>
    <alternativeName>
        <fullName evidence="1">16S rRNA m(4)C1402 methyltransferase</fullName>
    </alternativeName>
    <alternativeName>
        <fullName evidence="1">rRNA (cytosine-N(4)-)-methyltransferase RsmH</fullName>
    </alternativeName>
</protein>
<reference key="1">
    <citation type="submission" date="2007-05" db="EMBL/GenBank/DDBJ databases">
        <title>Complete sequence of Geobacter uraniireducens Rf4.</title>
        <authorList>
            <consortium name="US DOE Joint Genome Institute"/>
            <person name="Copeland A."/>
            <person name="Lucas S."/>
            <person name="Lapidus A."/>
            <person name="Barry K."/>
            <person name="Detter J.C."/>
            <person name="Glavina del Rio T."/>
            <person name="Hammon N."/>
            <person name="Israni S."/>
            <person name="Dalin E."/>
            <person name="Tice H."/>
            <person name="Pitluck S."/>
            <person name="Chertkov O."/>
            <person name="Brettin T."/>
            <person name="Bruce D."/>
            <person name="Han C."/>
            <person name="Schmutz J."/>
            <person name="Larimer F."/>
            <person name="Land M."/>
            <person name="Hauser L."/>
            <person name="Kyrpides N."/>
            <person name="Mikhailova N."/>
            <person name="Shelobolina E."/>
            <person name="Aklujkar M."/>
            <person name="Lovley D."/>
            <person name="Richardson P."/>
        </authorList>
    </citation>
    <scope>NUCLEOTIDE SEQUENCE [LARGE SCALE GENOMIC DNA]</scope>
    <source>
        <strain>ATCC BAA-1134 / JCM 13001 / Rf4</strain>
    </source>
</reference>
<organism>
    <name type="scientific">Geotalea uraniireducens (strain Rf4)</name>
    <name type="common">Geobacter uraniireducens</name>
    <dbReference type="NCBI Taxonomy" id="351605"/>
    <lineage>
        <taxon>Bacteria</taxon>
        <taxon>Pseudomonadati</taxon>
        <taxon>Thermodesulfobacteriota</taxon>
        <taxon>Desulfuromonadia</taxon>
        <taxon>Geobacterales</taxon>
        <taxon>Geobacteraceae</taxon>
        <taxon>Geotalea</taxon>
    </lineage>
</organism>
<gene>
    <name evidence="1" type="primary">rsmH</name>
    <name type="synonym">mraW</name>
    <name type="ordered locus">Gura_3982</name>
</gene>
<keyword id="KW-0963">Cytoplasm</keyword>
<keyword id="KW-0489">Methyltransferase</keyword>
<keyword id="KW-1185">Reference proteome</keyword>
<keyword id="KW-0698">rRNA processing</keyword>
<keyword id="KW-0949">S-adenosyl-L-methionine</keyword>
<keyword id="KW-0808">Transferase</keyword>
<evidence type="ECO:0000255" key="1">
    <source>
        <dbReference type="HAMAP-Rule" id="MF_01007"/>
    </source>
</evidence>
<evidence type="ECO:0000305" key="2"/>
<comment type="function">
    <text evidence="1">Specifically methylates the N4 position of cytidine in position 1402 (C1402) of 16S rRNA.</text>
</comment>
<comment type="catalytic activity">
    <reaction evidence="1">
        <text>cytidine(1402) in 16S rRNA + S-adenosyl-L-methionine = N(4)-methylcytidine(1402) in 16S rRNA + S-adenosyl-L-homocysteine + H(+)</text>
        <dbReference type="Rhea" id="RHEA:42928"/>
        <dbReference type="Rhea" id="RHEA-COMP:10286"/>
        <dbReference type="Rhea" id="RHEA-COMP:10287"/>
        <dbReference type="ChEBI" id="CHEBI:15378"/>
        <dbReference type="ChEBI" id="CHEBI:57856"/>
        <dbReference type="ChEBI" id="CHEBI:59789"/>
        <dbReference type="ChEBI" id="CHEBI:74506"/>
        <dbReference type="ChEBI" id="CHEBI:82748"/>
        <dbReference type="EC" id="2.1.1.199"/>
    </reaction>
</comment>
<comment type="subcellular location">
    <subcellularLocation>
        <location evidence="1">Cytoplasm</location>
    </subcellularLocation>
</comment>
<comment type="similarity">
    <text evidence="1">Belongs to the methyltransferase superfamily. RsmH family.</text>
</comment>
<comment type="sequence caution" evidence="2">
    <conflict type="erroneous initiation">
        <sequence resource="EMBL-CDS" id="ABQ28126"/>
    </conflict>
</comment>
<feature type="chain" id="PRO_0000386914" description="Ribosomal RNA small subunit methyltransferase H">
    <location>
        <begin position="1"/>
        <end position="312"/>
    </location>
</feature>
<feature type="binding site" evidence="1">
    <location>
        <begin position="34"/>
        <end position="36"/>
    </location>
    <ligand>
        <name>S-adenosyl-L-methionine</name>
        <dbReference type="ChEBI" id="CHEBI:59789"/>
    </ligand>
</feature>
<feature type="binding site" evidence="1">
    <location>
        <position position="54"/>
    </location>
    <ligand>
        <name>S-adenosyl-L-methionine</name>
        <dbReference type="ChEBI" id="CHEBI:59789"/>
    </ligand>
</feature>
<feature type="binding site" evidence="1">
    <location>
        <position position="81"/>
    </location>
    <ligand>
        <name>S-adenosyl-L-methionine</name>
        <dbReference type="ChEBI" id="CHEBI:59789"/>
    </ligand>
</feature>
<feature type="binding site" evidence="1">
    <location>
        <position position="102"/>
    </location>
    <ligand>
        <name>S-adenosyl-L-methionine</name>
        <dbReference type="ChEBI" id="CHEBI:59789"/>
    </ligand>
</feature>
<feature type="binding site" evidence="1">
    <location>
        <position position="109"/>
    </location>
    <ligand>
        <name>S-adenosyl-L-methionine</name>
        <dbReference type="ChEBI" id="CHEBI:59789"/>
    </ligand>
</feature>
<name>RSMH_GEOUR</name>
<dbReference type="EC" id="2.1.1.199" evidence="1"/>
<dbReference type="EMBL" id="CP000698">
    <property type="protein sequence ID" value="ABQ28126.1"/>
    <property type="status" value="ALT_INIT"/>
    <property type="molecule type" value="Genomic_DNA"/>
</dbReference>
<dbReference type="RefSeq" id="WP_041245588.1">
    <property type="nucleotide sequence ID" value="NC_009483.1"/>
</dbReference>
<dbReference type="SMR" id="A5G8K8"/>
<dbReference type="STRING" id="351605.Gura_3982"/>
<dbReference type="KEGG" id="gur:Gura_3982"/>
<dbReference type="HOGENOM" id="CLU_038422_2_0_7"/>
<dbReference type="OrthoDB" id="9806637at2"/>
<dbReference type="Proteomes" id="UP000006695">
    <property type="component" value="Chromosome"/>
</dbReference>
<dbReference type="GO" id="GO:0005737">
    <property type="term" value="C:cytoplasm"/>
    <property type="evidence" value="ECO:0007669"/>
    <property type="project" value="UniProtKB-SubCell"/>
</dbReference>
<dbReference type="GO" id="GO:0071424">
    <property type="term" value="F:rRNA (cytosine-N4-)-methyltransferase activity"/>
    <property type="evidence" value="ECO:0007669"/>
    <property type="project" value="UniProtKB-UniRule"/>
</dbReference>
<dbReference type="GO" id="GO:0070475">
    <property type="term" value="P:rRNA base methylation"/>
    <property type="evidence" value="ECO:0007669"/>
    <property type="project" value="UniProtKB-UniRule"/>
</dbReference>
<dbReference type="FunFam" id="1.10.150.170:FF:000001">
    <property type="entry name" value="Ribosomal RNA small subunit methyltransferase H"/>
    <property type="match status" value="1"/>
</dbReference>
<dbReference type="Gene3D" id="1.10.150.170">
    <property type="entry name" value="Putative methyltransferase TM0872, insert domain"/>
    <property type="match status" value="1"/>
</dbReference>
<dbReference type="Gene3D" id="3.40.50.150">
    <property type="entry name" value="Vaccinia Virus protein VP39"/>
    <property type="match status" value="1"/>
</dbReference>
<dbReference type="HAMAP" id="MF_01007">
    <property type="entry name" value="16SrRNA_methyltr_H"/>
    <property type="match status" value="1"/>
</dbReference>
<dbReference type="InterPro" id="IPR002903">
    <property type="entry name" value="RsmH"/>
</dbReference>
<dbReference type="InterPro" id="IPR023397">
    <property type="entry name" value="SAM-dep_MeTrfase_MraW_recog"/>
</dbReference>
<dbReference type="InterPro" id="IPR029063">
    <property type="entry name" value="SAM-dependent_MTases_sf"/>
</dbReference>
<dbReference type="NCBIfam" id="TIGR00006">
    <property type="entry name" value="16S rRNA (cytosine(1402)-N(4))-methyltransferase RsmH"/>
    <property type="match status" value="1"/>
</dbReference>
<dbReference type="PANTHER" id="PTHR11265:SF0">
    <property type="entry name" value="12S RRNA N4-METHYLCYTIDINE METHYLTRANSFERASE"/>
    <property type="match status" value="1"/>
</dbReference>
<dbReference type="PANTHER" id="PTHR11265">
    <property type="entry name" value="S-ADENOSYL-METHYLTRANSFERASE MRAW"/>
    <property type="match status" value="1"/>
</dbReference>
<dbReference type="Pfam" id="PF01795">
    <property type="entry name" value="Methyltransf_5"/>
    <property type="match status" value="1"/>
</dbReference>
<dbReference type="PIRSF" id="PIRSF004486">
    <property type="entry name" value="MraW"/>
    <property type="match status" value="1"/>
</dbReference>
<dbReference type="SUPFAM" id="SSF81799">
    <property type="entry name" value="Putative methyltransferase TM0872, insert domain"/>
    <property type="match status" value="1"/>
</dbReference>
<dbReference type="SUPFAM" id="SSF53335">
    <property type="entry name" value="S-adenosyl-L-methionine-dependent methyltransferases"/>
    <property type="match status" value="1"/>
</dbReference>